<evidence type="ECO:0000255" key="1">
    <source>
        <dbReference type="HAMAP-Rule" id="MF_00188"/>
    </source>
</evidence>
<reference key="1">
    <citation type="submission" date="2008-01" db="EMBL/GenBank/DDBJ databases">
        <title>Complete sequence of Pseudomonas putida GB-1.</title>
        <authorList>
            <consortium name="US DOE Joint Genome Institute"/>
            <person name="Copeland A."/>
            <person name="Lucas S."/>
            <person name="Lapidus A."/>
            <person name="Barry K."/>
            <person name="Glavina del Rio T."/>
            <person name="Dalin E."/>
            <person name="Tice H."/>
            <person name="Pitluck S."/>
            <person name="Bruce D."/>
            <person name="Goodwin L."/>
            <person name="Chertkov O."/>
            <person name="Brettin T."/>
            <person name="Detter J.C."/>
            <person name="Han C."/>
            <person name="Kuske C.R."/>
            <person name="Schmutz J."/>
            <person name="Larimer F."/>
            <person name="Land M."/>
            <person name="Hauser L."/>
            <person name="Kyrpides N."/>
            <person name="Kim E."/>
            <person name="McCarthy J.K."/>
            <person name="Richardson P."/>
        </authorList>
    </citation>
    <scope>NUCLEOTIDE SEQUENCE [LARGE SCALE GENOMIC DNA]</scope>
    <source>
        <strain>GB-1</strain>
    </source>
</reference>
<proteinExistence type="inferred from homology"/>
<name>HTPX_PSEPG</name>
<dbReference type="EC" id="3.4.24.-" evidence="1"/>
<dbReference type="EMBL" id="CP000926">
    <property type="protein sequence ID" value="ABY97353.1"/>
    <property type="molecule type" value="Genomic_DNA"/>
</dbReference>
<dbReference type="RefSeq" id="WP_012271122.1">
    <property type="nucleotide sequence ID" value="NC_010322.1"/>
</dbReference>
<dbReference type="SMR" id="B0KUP8"/>
<dbReference type="MEROPS" id="M48.002"/>
<dbReference type="KEGG" id="ppg:PputGB1_1446"/>
<dbReference type="eggNOG" id="COG0501">
    <property type="taxonomic scope" value="Bacteria"/>
</dbReference>
<dbReference type="HOGENOM" id="CLU_042266_1_0_6"/>
<dbReference type="Proteomes" id="UP000002157">
    <property type="component" value="Chromosome"/>
</dbReference>
<dbReference type="GO" id="GO:0005886">
    <property type="term" value="C:plasma membrane"/>
    <property type="evidence" value="ECO:0007669"/>
    <property type="project" value="UniProtKB-SubCell"/>
</dbReference>
<dbReference type="GO" id="GO:0004222">
    <property type="term" value="F:metalloendopeptidase activity"/>
    <property type="evidence" value="ECO:0007669"/>
    <property type="project" value="UniProtKB-UniRule"/>
</dbReference>
<dbReference type="GO" id="GO:0008270">
    <property type="term" value="F:zinc ion binding"/>
    <property type="evidence" value="ECO:0007669"/>
    <property type="project" value="UniProtKB-UniRule"/>
</dbReference>
<dbReference type="GO" id="GO:0006508">
    <property type="term" value="P:proteolysis"/>
    <property type="evidence" value="ECO:0007669"/>
    <property type="project" value="UniProtKB-KW"/>
</dbReference>
<dbReference type="CDD" id="cd07335">
    <property type="entry name" value="M48B_HtpX_like"/>
    <property type="match status" value="1"/>
</dbReference>
<dbReference type="Gene3D" id="3.30.2010.10">
    <property type="entry name" value="Metalloproteases ('zincins'), catalytic domain"/>
    <property type="match status" value="1"/>
</dbReference>
<dbReference type="HAMAP" id="MF_00188">
    <property type="entry name" value="Pept_M48_protease_HtpX"/>
    <property type="match status" value="1"/>
</dbReference>
<dbReference type="InterPro" id="IPR050083">
    <property type="entry name" value="HtpX_protease"/>
</dbReference>
<dbReference type="InterPro" id="IPR022919">
    <property type="entry name" value="Pept_M48_protease_HtpX"/>
</dbReference>
<dbReference type="InterPro" id="IPR001915">
    <property type="entry name" value="Peptidase_M48"/>
</dbReference>
<dbReference type="NCBIfam" id="NF003965">
    <property type="entry name" value="PRK05457.1"/>
    <property type="match status" value="1"/>
</dbReference>
<dbReference type="PANTHER" id="PTHR43221">
    <property type="entry name" value="PROTEASE HTPX"/>
    <property type="match status" value="1"/>
</dbReference>
<dbReference type="PANTHER" id="PTHR43221:SF1">
    <property type="entry name" value="PROTEASE HTPX"/>
    <property type="match status" value="1"/>
</dbReference>
<dbReference type="Pfam" id="PF01435">
    <property type="entry name" value="Peptidase_M48"/>
    <property type="match status" value="1"/>
</dbReference>
<keyword id="KW-0997">Cell inner membrane</keyword>
<keyword id="KW-1003">Cell membrane</keyword>
<keyword id="KW-0378">Hydrolase</keyword>
<keyword id="KW-0472">Membrane</keyword>
<keyword id="KW-0479">Metal-binding</keyword>
<keyword id="KW-0482">Metalloprotease</keyword>
<keyword id="KW-0645">Protease</keyword>
<keyword id="KW-0812">Transmembrane</keyword>
<keyword id="KW-1133">Transmembrane helix</keyword>
<keyword id="KW-0862">Zinc</keyword>
<sequence length="295" mass="32246">MMRILLFVATNLAVVLVASITLSLFGFNGFMAANGVDLNLSSLLVFCAVFGFAGSLVSLFISKWMAKMSTGTQIISQPRTRHEQWLLQTVEELSREAGIKMPEVGIFPAYEANAFATGWNRNDALVAVSQGLLERFSPDEVRAVLAHEIGHVANGDMVTLALVQGVVNTFVMFFARIIGNFVDKVIFKNEEGQGIAYYVATIVAELILGILASMIVMWFSRRREYRADEAGAQLAGTSAMIGALQRLRVEQGLPVHMPDTMKAFGINGGLKHGLAGLLMSHPPLEDRIEALRRRG</sequence>
<comment type="cofactor">
    <cofactor evidence="1">
        <name>Zn(2+)</name>
        <dbReference type="ChEBI" id="CHEBI:29105"/>
    </cofactor>
    <text evidence="1">Binds 1 zinc ion per subunit.</text>
</comment>
<comment type="subcellular location">
    <subcellularLocation>
        <location evidence="1">Cell inner membrane</location>
        <topology evidence="1">Multi-pass membrane protein</topology>
    </subcellularLocation>
</comment>
<comment type="similarity">
    <text evidence="1">Belongs to the peptidase M48B family.</text>
</comment>
<protein>
    <recommendedName>
        <fullName evidence="1">Protease HtpX</fullName>
        <ecNumber evidence="1">3.4.24.-</ecNumber>
    </recommendedName>
    <alternativeName>
        <fullName evidence="1">Heat shock protein HtpX</fullName>
    </alternativeName>
</protein>
<feature type="chain" id="PRO_1000077476" description="Protease HtpX">
    <location>
        <begin position="1"/>
        <end position="295"/>
    </location>
</feature>
<feature type="transmembrane region" description="Helical" evidence="1">
    <location>
        <begin position="4"/>
        <end position="24"/>
    </location>
</feature>
<feature type="transmembrane region" description="Helical" evidence="1">
    <location>
        <begin position="41"/>
        <end position="61"/>
    </location>
</feature>
<feature type="transmembrane region" description="Helical" evidence="1">
    <location>
        <begin position="158"/>
        <end position="178"/>
    </location>
</feature>
<feature type="transmembrane region" description="Helical" evidence="1">
    <location>
        <begin position="199"/>
        <end position="219"/>
    </location>
</feature>
<feature type="active site" evidence="1">
    <location>
        <position position="148"/>
    </location>
</feature>
<feature type="binding site" evidence="1">
    <location>
        <position position="147"/>
    </location>
    <ligand>
        <name>Zn(2+)</name>
        <dbReference type="ChEBI" id="CHEBI:29105"/>
        <note>catalytic</note>
    </ligand>
</feature>
<feature type="binding site" evidence="1">
    <location>
        <position position="151"/>
    </location>
    <ligand>
        <name>Zn(2+)</name>
        <dbReference type="ChEBI" id="CHEBI:29105"/>
        <note>catalytic</note>
    </ligand>
</feature>
<feature type="binding site" evidence="1">
    <location>
        <position position="224"/>
    </location>
    <ligand>
        <name>Zn(2+)</name>
        <dbReference type="ChEBI" id="CHEBI:29105"/>
        <note>catalytic</note>
    </ligand>
</feature>
<gene>
    <name evidence="1" type="primary">htpX</name>
    <name type="ordered locus">PputGB1_1446</name>
</gene>
<organism>
    <name type="scientific">Pseudomonas putida (strain GB-1)</name>
    <dbReference type="NCBI Taxonomy" id="76869"/>
    <lineage>
        <taxon>Bacteria</taxon>
        <taxon>Pseudomonadati</taxon>
        <taxon>Pseudomonadota</taxon>
        <taxon>Gammaproteobacteria</taxon>
        <taxon>Pseudomonadales</taxon>
        <taxon>Pseudomonadaceae</taxon>
        <taxon>Pseudomonas</taxon>
    </lineage>
</organism>
<accession>B0KUP8</accession>